<protein>
    <recommendedName>
        <fullName evidence="1">Protein SprT-like</fullName>
    </recommendedName>
</protein>
<sequence length="149" mass="17709">MDNEQLQKLTEDISLQDFGKPFRHRAFFNDRLKTTGGRYMLSSHNIELNRKYLIEHGRSELVGIIKHELCHYHLHLEGKGYKHRDKDFRDLLQKVGAPRFCTPLQTKKTQKKTYMYRCAACGQQYIKKRAMNPERYACGKCRGKIKRIF</sequence>
<comment type="cofactor">
    <cofactor evidence="1">
        <name>Zn(2+)</name>
        <dbReference type="ChEBI" id="CHEBI:29105"/>
    </cofactor>
    <text evidence="1">Binds 1 zinc ion.</text>
</comment>
<comment type="subcellular location">
    <subcellularLocation>
        <location evidence="1">Cytoplasm</location>
    </subcellularLocation>
</comment>
<comment type="similarity">
    <text evidence="1">Belongs to the SprT family.</text>
</comment>
<dbReference type="EMBL" id="CP000560">
    <property type="protein sequence ID" value="ABS72910.1"/>
    <property type="molecule type" value="Genomic_DNA"/>
</dbReference>
<dbReference type="RefSeq" id="WP_012116873.1">
    <property type="nucleotide sequence ID" value="NC_009725.2"/>
</dbReference>
<dbReference type="SMR" id="A7Z1N4"/>
<dbReference type="GeneID" id="93079644"/>
<dbReference type="KEGG" id="bay:RBAM_005110"/>
<dbReference type="HOGENOM" id="CLU_123820_0_0_9"/>
<dbReference type="Proteomes" id="UP000001120">
    <property type="component" value="Chromosome"/>
</dbReference>
<dbReference type="GO" id="GO:0005737">
    <property type="term" value="C:cytoplasm"/>
    <property type="evidence" value="ECO:0007669"/>
    <property type="project" value="UniProtKB-SubCell"/>
</dbReference>
<dbReference type="GO" id="GO:0008270">
    <property type="term" value="F:zinc ion binding"/>
    <property type="evidence" value="ECO:0007669"/>
    <property type="project" value="UniProtKB-UniRule"/>
</dbReference>
<dbReference type="GO" id="GO:0006950">
    <property type="term" value="P:response to stress"/>
    <property type="evidence" value="ECO:0007669"/>
    <property type="project" value="UniProtKB-ARBA"/>
</dbReference>
<dbReference type="HAMAP" id="MF_00745">
    <property type="entry name" value="SprT_like"/>
    <property type="match status" value="1"/>
</dbReference>
<dbReference type="InterPro" id="IPR006640">
    <property type="entry name" value="SprT-like_domain"/>
</dbReference>
<dbReference type="InterPro" id="IPR035240">
    <property type="entry name" value="SprT_Zn_ribbon"/>
</dbReference>
<dbReference type="InterPro" id="IPR023524">
    <property type="entry name" value="Uncharacterised_SprT-like"/>
</dbReference>
<dbReference type="NCBIfam" id="NF003339">
    <property type="entry name" value="PRK04351.1"/>
    <property type="match status" value="1"/>
</dbReference>
<dbReference type="Pfam" id="PF10263">
    <property type="entry name" value="SprT-like"/>
    <property type="match status" value="1"/>
</dbReference>
<dbReference type="Pfam" id="PF17283">
    <property type="entry name" value="Zn_ribbon_SprT"/>
    <property type="match status" value="1"/>
</dbReference>
<dbReference type="SMART" id="SM00731">
    <property type="entry name" value="SprT"/>
    <property type="match status" value="1"/>
</dbReference>
<organism>
    <name type="scientific">Bacillus velezensis (strain DSM 23117 / BGSC 10A6 / LMG 26770 / FZB42)</name>
    <name type="common">Bacillus amyloliquefaciens subsp. plantarum</name>
    <dbReference type="NCBI Taxonomy" id="326423"/>
    <lineage>
        <taxon>Bacteria</taxon>
        <taxon>Bacillati</taxon>
        <taxon>Bacillota</taxon>
        <taxon>Bacilli</taxon>
        <taxon>Bacillales</taxon>
        <taxon>Bacillaceae</taxon>
        <taxon>Bacillus</taxon>
        <taxon>Bacillus amyloliquefaciens group</taxon>
    </lineage>
</organism>
<reference key="1">
    <citation type="journal article" date="2007" name="Nat. Biotechnol.">
        <title>Comparative analysis of the complete genome sequence of the plant growth-promoting bacterium Bacillus amyloliquefaciens FZB42.</title>
        <authorList>
            <person name="Chen X.H."/>
            <person name="Koumoutsi A."/>
            <person name="Scholz R."/>
            <person name="Eisenreich A."/>
            <person name="Schneider K."/>
            <person name="Heinemeyer I."/>
            <person name="Morgenstern B."/>
            <person name="Voss B."/>
            <person name="Hess W.R."/>
            <person name="Reva O."/>
            <person name="Junge H."/>
            <person name="Voigt B."/>
            <person name="Jungblut P.R."/>
            <person name="Vater J."/>
            <person name="Suessmuth R."/>
            <person name="Liesegang H."/>
            <person name="Strittmatter A."/>
            <person name="Gottschalk G."/>
            <person name="Borriss R."/>
        </authorList>
    </citation>
    <scope>NUCLEOTIDE SEQUENCE [LARGE SCALE GENOMIC DNA]</scope>
    <source>
        <strain>DSM 23117 / BGSC 10A6 / LMG 26770 / FZB42</strain>
    </source>
</reference>
<feature type="chain" id="PRO_1000046506" description="Protein SprT-like">
    <location>
        <begin position="1"/>
        <end position="149"/>
    </location>
</feature>
<feature type="domain" description="SprT-like" evidence="1">
    <location>
        <begin position="6"/>
        <end position="147"/>
    </location>
</feature>
<feature type="active site" evidence="1">
    <location>
        <position position="68"/>
    </location>
</feature>
<feature type="binding site" evidence="1">
    <location>
        <position position="67"/>
    </location>
    <ligand>
        <name>Zn(2+)</name>
        <dbReference type="ChEBI" id="CHEBI:29105"/>
    </ligand>
</feature>
<feature type="binding site" evidence="1">
    <location>
        <position position="71"/>
    </location>
    <ligand>
        <name>Zn(2+)</name>
        <dbReference type="ChEBI" id="CHEBI:29105"/>
    </ligand>
</feature>
<evidence type="ECO:0000255" key="1">
    <source>
        <dbReference type="HAMAP-Rule" id="MF_00745"/>
    </source>
</evidence>
<proteinExistence type="inferred from homology"/>
<accession>A7Z1N4</accession>
<gene>
    <name type="ordered locus">RBAM_005110</name>
</gene>
<name>SPRTL_BACVZ</name>
<keyword id="KW-0963">Cytoplasm</keyword>
<keyword id="KW-0479">Metal-binding</keyword>
<keyword id="KW-0862">Zinc</keyword>